<gene>
    <name evidence="9 10" type="primary">let-70</name>
    <name evidence="8 10" type="synonym">ubc-2</name>
    <name evidence="10" type="ORF">M7.1</name>
</gene>
<proteinExistence type="evidence at protein level"/>
<reference key="1">
    <citation type="journal article" date="1993" name="Mol. Cell. Biol.">
        <title>The ubc-2 gene of Caenorhabditis elegans encodes a ubiquitin-conjugating enzyme involved in selective protein degradation.</title>
        <authorList>
            <person name="Zhen M."/>
            <person name="Heinlein R."/>
            <person name="Jones D."/>
            <person name="Jentsch S."/>
            <person name="Candido E.P.M."/>
        </authorList>
    </citation>
    <scope>NUCLEOTIDE SEQUENCE [GENOMIC DNA]</scope>
    <scope>DEVELOPMENTAL STAGE</scope>
</reference>
<reference key="2">
    <citation type="journal article" date="1996" name="EMBO J.">
        <title>An essential ubiquitin-conjugating enzyme with tissue and developmental specificity in the nematode Caenorhabditis elegans.</title>
        <authorList>
            <person name="Zhen M."/>
            <person name="Scheni J.E."/>
            <person name="Baillie D.L."/>
            <person name="Candido E.P.M."/>
        </authorList>
    </citation>
    <scope>NUCLEOTIDE SEQUENCE [GENOMIC DNA]</scope>
    <scope>TISSUE SPECIFICITY</scope>
    <scope>DEVELOPMENTAL STAGE</scope>
    <scope>MUTAGENESIS OF HIS-75</scope>
</reference>
<reference key="3">
    <citation type="journal article" date="1998" name="Science">
        <title>Genome sequence of the nematode C. elegans: a platform for investigating biology.</title>
        <authorList>
            <consortium name="The C. elegans sequencing consortium"/>
        </authorList>
    </citation>
    <scope>NUCLEOTIDE SEQUENCE [LARGE SCALE GENOMIC DNA]</scope>
    <source>
        <strain>Bristol N2</strain>
    </source>
</reference>
<reference key="4">
    <citation type="journal article" date="2006" name="EMBO J.">
        <title>A conserved pathway to activate BRCA1-dependent ubiquitylation at DNA damage sites.</title>
        <authorList>
            <person name="Polanowska J."/>
            <person name="Martin J.S."/>
            <person name="Garcia-Muse T."/>
            <person name="Petalcorin M.I.R."/>
            <person name="Boulton S.J."/>
        </authorList>
    </citation>
    <scope>FUNCTION</scope>
    <scope>INTERACTION WITH BRC-1-BRD-1 HETERODIMER</scope>
    <scope>SUBCELLULAR LOCATION</scope>
    <scope>DISRUPTION PHENOTYPE</scope>
</reference>
<reference key="5">
    <citation type="journal article" date="2016" name="Elife">
        <title>HSF-1 activates the ubiquitin proteasome system to promote non-apoptotic developmental cell death in C. elegans.</title>
        <authorList>
            <person name="Kinet M.J."/>
            <person name="Malin J.A."/>
            <person name="Abraham M.C."/>
            <person name="Blum E.S."/>
            <person name="Silverman M.R."/>
            <person name="Lu Y."/>
            <person name="Shaham S."/>
        </authorList>
    </citation>
    <scope>FUNCTION</scope>
    <scope>SUBCELLULAR LOCATION</scope>
    <scope>DEVELOPMENTAL STAGE</scope>
    <scope>DISRUPTION PHENOTYPE</scope>
    <scope>MUTAGENESIS OF PRO-61</scope>
</reference>
<accession>P35129</accession>
<dbReference type="EC" id="2.3.2.23"/>
<dbReference type="EMBL" id="S56051">
    <property type="protein sequence ID" value="AAB25489.2"/>
    <property type="molecule type" value="Genomic_DNA"/>
</dbReference>
<dbReference type="EMBL" id="Z68337">
    <property type="protein sequence ID" value="CAA92745.1"/>
    <property type="molecule type" value="Genomic_DNA"/>
</dbReference>
<dbReference type="PIR" id="A48145">
    <property type="entry name" value="A48145"/>
</dbReference>
<dbReference type="PIR" id="T23820">
    <property type="entry name" value="T23820"/>
</dbReference>
<dbReference type="RefSeq" id="NP_502065.1">
    <property type="nucleotide sequence ID" value="NM_069664.7"/>
</dbReference>
<dbReference type="PDB" id="1Z2U">
    <property type="method" value="X-ray"/>
    <property type="resolution" value="1.10 A"/>
    <property type="chains" value="A=1-147"/>
</dbReference>
<dbReference type="PDBsum" id="1Z2U"/>
<dbReference type="SMR" id="P35129"/>
<dbReference type="BioGRID" id="43106">
    <property type="interactions" value="25"/>
</dbReference>
<dbReference type="DIP" id="DIP-24306N"/>
<dbReference type="FunCoup" id="P35129">
    <property type="interactions" value="3339"/>
</dbReference>
<dbReference type="IntAct" id="P35129">
    <property type="interactions" value="2"/>
</dbReference>
<dbReference type="STRING" id="6239.M7.1.1"/>
<dbReference type="PaxDb" id="6239-M7.1"/>
<dbReference type="PeptideAtlas" id="P35129"/>
<dbReference type="EnsemblMetazoa" id="M7.1.1">
    <property type="protein sequence ID" value="M7.1.1"/>
    <property type="gene ID" value="WBGene00002344"/>
</dbReference>
<dbReference type="GeneID" id="178006"/>
<dbReference type="KEGG" id="cel:CELE_M7.1"/>
<dbReference type="UCSC" id="M7.1">
    <property type="organism name" value="c. elegans"/>
</dbReference>
<dbReference type="AGR" id="WB:WBGene00002344"/>
<dbReference type="CTD" id="178006"/>
<dbReference type="WormBase" id="M7.1">
    <property type="protein sequence ID" value="CE03482"/>
    <property type="gene ID" value="WBGene00002344"/>
    <property type="gene designation" value="let-70"/>
</dbReference>
<dbReference type="eggNOG" id="KOG0417">
    <property type="taxonomic scope" value="Eukaryota"/>
</dbReference>
<dbReference type="GeneTree" id="ENSGT00940000155109"/>
<dbReference type="HOGENOM" id="CLU_030988_13_3_1"/>
<dbReference type="InParanoid" id="P35129"/>
<dbReference type="OMA" id="PNIASMY"/>
<dbReference type="OrthoDB" id="7851174at2759"/>
<dbReference type="PhylomeDB" id="P35129"/>
<dbReference type="Reactome" id="R-CEL-1234176">
    <property type="pathway name" value="Oxygen-dependent proline hydroxylation of Hypoxia-inducible Factor Alpha"/>
</dbReference>
<dbReference type="Reactome" id="R-CEL-201451">
    <property type="pathway name" value="Signaling by BMP"/>
</dbReference>
<dbReference type="Reactome" id="R-CEL-2173795">
    <property type="pathway name" value="Downregulation of SMAD2/3:SMAD4 transcriptional activity"/>
</dbReference>
<dbReference type="Reactome" id="R-CEL-5357905">
    <property type="pathway name" value="Regulation of TNFR1 signaling"/>
</dbReference>
<dbReference type="Reactome" id="R-CEL-5689896">
    <property type="pathway name" value="Ovarian tumor domain proteases"/>
</dbReference>
<dbReference type="Reactome" id="R-CEL-8866652">
    <property type="pathway name" value="Synthesis of active ubiquitin: roles of E1 and E2 enzymes"/>
</dbReference>
<dbReference type="Reactome" id="R-CEL-8866654">
    <property type="pathway name" value="E3 ubiquitin ligases ubiquitinate target proteins"/>
</dbReference>
<dbReference type="Reactome" id="R-CEL-8951664">
    <property type="pathway name" value="Neddylation"/>
</dbReference>
<dbReference type="Reactome" id="R-CEL-9033241">
    <property type="pathway name" value="Peroxisomal protein import"/>
</dbReference>
<dbReference type="Reactome" id="R-CEL-983168">
    <property type="pathway name" value="Antigen processing: Ubiquitination &amp; Proteasome degradation"/>
</dbReference>
<dbReference type="UniPathway" id="UPA00143"/>
<dbReference type="EvolutionaryTrace" id="P35129"/>
<dbReference type="PRO" id="PR:P35129"/>
<dbReference type="Proteomes" id="UP000001940">
    <property type="component" value="Chromosome IV"/>
</dbReference>
<dbReference type="Bgee" id="WBGene00002344">
    <property type="expression patterns" value="Expressed in embryo and 4 other cell types or tissues"/>
</dbReference>
<dbReference type="GO" id="GO:0005694">
    <property type="term" value="C:chromosome"/>
    <property type="evidence" value="ECO:0007669"/>
    <property type="project" value="UniProtKB-SubCell"/>
</dbReference>
<dbReference type="GO" id="GO:0005737">
    <property type="term" value="C:cytoplasm"/>
    <property type="evidence" value="ECO:0007669"/>
    <property type="project" value="UniProtKB-SubCell"/>
</dbReference>
<dbReference type="GO" id="GO:0005634">
    <property type="term" value="C:nucleus"/>
    <property type="evidence" value="ECO:0000318"/>
    <property type="project" value="GO_Central"/>
</dbReference>
<dbReference type="GO" id="GO:0005524">
    <property type="term" value="F:ATP binding"/>
    <property type="evidence" value="ECO:0007669"/>
    <property type="project" value="UniProtKB-KW"/>
</dbReference>
<dbReference type="GO" id="GO:0061631">
    <property type="term" value="F:ubiquitin conjugating enzyme activity"/>
    <property type="evidence" value="ECO:0000315"/>
    <property type="project" value="UniProtKB"/>
</dbReference>
<dbReference type="GO" id="GO:0031625">
    <property type="term" value="F:ubiquitin protein ligase binding"/>
    <property type="evidence" value="ECO:0000353"/>
    <property type="project" value="WormBase"/>
</dbReference>
<dbReference type="GO" id="GO:0004842">
    <property type="term" value="F:ubiquitin-protein transferase activity"/>
    <property type="evidence" value="ECO:0000314"/>
    <property type="project" value="WormBase"/>
</dbReference>
<dbReference type="GO" id="GO:0010623">
    <property type="term" value="P:programmed cell death involved in cell development"/>
    <property type="evidence" value="ECO:0000315"/>
    <property type="project" value="UniProtKB"/>
</dbReference>
<dbReference type="GO" id="GO:0000209">
    <property type="term" value="P:protein polyubiquitination"/>
    <property type="evidence" value="ECO:0000318"/>
    <property type="project" value="GO_Central"/>
</dbReference>
<dbReference type="GO" id="GO:0016567">
    <property type="term" value="P:protein ubiquitination"/>
    <property type="evidence" value="ECO:0000314"/>
    <property type="project" value="WormBase"/>
</dbReference>
<dbReference type="GO" id="GO:0006511">
    <property type="term" value="P:ubiquitin-dependent protein catabolic process"/>
    <property type="evidence" value="ECO:0000314"/>
    <property type="project" value="WormBase"/>
</dbReference>
<dbReference type="CDD" id="cd23792">
    <property type="entry name" value="UBCc_UBE2D"/>
    <property type="match status" value="1"/>
</dbReference>
<dbReference type="FunFam" id="3.10.110.10:FF:000101">
    <property type="entry name" value="Ubiquitin-conjugating enzyme E2 D2"/>
    <property type="match status" value="1"/>
</dbReference>
<dbReference type="Gene3D" id="3.10.110.10">
    <property type="entry name" value="Ubiquitin Conjugating Enzyme"/>
    <property type="match status" value="1"/>
</dbReference>
<dbReference type="InterPro" id="IPR000608">
    <property type="entry name" value="UBQ-conjugat_E2_core"/>
</dbReference>
<dbReference type="InterPro" id="IPR023313">
    <property type="entry name" value="UBQ-conjugating_AS"/>
</dbReference>
<dbReference type="InterPro" id="IPR016135">
    <property type="entry name" value="UBQ-conjugating_enzyme/RWD"/>
</dbReference>
<dbReference type="PANTHER" id="PTHR24068">
    <property type="entry name" value="UBIQUITIN-CONJUGATING ENZYME E2"/>
    <property type="match status" value="1"/>
</dbReference>
<dbReference type="Pfam" id="PF00179">
    <property type="entry name" value="UQ_con"/>
    <property type="match status" value="1"/>
</dbReference>
<dbReference type="SMART" id="SM00212">
    <property type="entry name" value="UBCc"/>
    <property type="match status" value="1"/>
</dbReference>
<dbReference type="SUPFAM" id="SSF54495">
    <property type="entry name" value="UBC-like"/>
    <property type="match status" value="1"/>
</dbReference>
<dbReference type="PROSITE" id="PS00183">
    <property type="entry name" value="UBC_1"/>
    <property type="match status" value="1"/>
</dbReference>
<dbReference type="PROSITE" id="PS50127">
    <property type="entry name" value="UBC_2"/>
    <property type="match status" value="1"/>
</dbReference>
<keyword id="KW-0002">3D-structure</keyword>
<keyword id="KW-0067">ATP-binding</keyword>
<keyword id="KW-0158">Chromosome</keyword>
<keyword id="KW-0963">Cytoplasm</keyword>
<keyword id="KW-0547">Nucleotide-binding</keyword>
<keyword id="KW-0539">Nucleus</keyword>
<keyword id="KW-1185">Reference proteome</keyword>
<keyword id="KW-0808">Transferase</keyword>
<keyword id="KW-0833">Ubl conjugation pathway</keyword>
<comment type="function">
    <text evidence="1 4 5">Catalyzes the covalent attachment of ubiquitin to other proteins (By similarity). Mediates the selective degradation of short-lived and abnormal proteins (PubMed:16628214). Plays a role in the DNA damage response (PubMed:16628214). In particular, in response to ionizing radiation, associates with the E3 ubiquitin-protein ligase brc-1-brd-1 heterodimer on chromatin to activate E3-ubiquitin ligase activity of the heterodimer, and thus its DNA damage repair mechanisms (PubMed:16628214). Required, cell autonomously, for death of the linker cell, a male-specific cell which guides the elongation of the gonad; perhaps acting as part of the ubiquitin proteasome system (UPS) and modulated by heat shock transcription factor hsf-1 (PubMed:26952214).</text>
</comment>
<comment type="catalytic activity">
    <reaction evidence="2 3">
        <text>S-ubiquitinyl-[E1 ubiquitin-activating enzyme]-L-cysteine + [E2 ubiquitin-conjugating enzyme]-L-cysteine = [E1 ubiquitin-activating enzyme]-L-cysteine + S-ubiquitinyl-[E2 ubiquitin-conjugating enzyme]-L-cysteine.</text>
        <dbReference type="EC" id="2.3.2.23"/>
    </reaction>
</comment>
<comment type="pathway">
    <text evidence="2">Protein modification; protein ubiquitination.</text>
</comment>
<comment type="subunit">
    <text evidence="4">Interacts with the brc-1-brd-1 heterodimer following ionizing irradiation.</text>
</comment>
<comment type="subcellular location">
    <subcellularLocation>
        <location evidence="4 5">Nucleus</location>
    </subcellularLocation>
    <subcellularLocation>
        <location evidence="4">Chromosome</location>
    </subcellularLocation>
    <subcellularLocation>
        <location evidence="5">Cytoplasm</location>
    </subcellularLocation>
</comment>
<comment type="tissue specificity">
    <text evidence="7">Expressed in the nervous system.</text>
</comment>
<comment type="developmental stage">
    <text evidence="5 6 7">Expressed at all stages of development (PubMed:8441382, PubMed:8670823). Expressed in most embryonic tissues and larval tissues at the early stages (PubMed:8670823). Highly expressed in neurons, pharynx, the hyperdermis and body muscles in L1, L2, L3 and dauer larvae (PubMed:8670823). From the L4 stage of larval development and in adults, expression is mainly restricted to the nervous system, but is also expressed in the pharynx and hyperdermis (PubMed:8670823). Expressed in the linker cell, a male-specific cell which guides the elongation of the gonad, about 1-2 hours before induction of linker cell death (PubMed:26952214).</text>
</comment>
<comment type="disruption phenotype">
    <text evidence="4 5">RNAi-mediated knockdown results in reduced ubiquitination at DNA damage sites (PubMed:16628214). Inappropriate survival of male gonadal linker cell (PubMed:26952214).</text>
</comment>
<comment type="similarity">
    <text evidence="2">Belongs to the ubiquitin-conjugating enzyme family.</text>
</comment>
<sequence length="147" mass="16705">MALKRIQKELQDLGRDPPAQCSAGPVGDDLFHWQATIMGPPESPYQGGVFFLTIHFPTDYPFKPPKVAFTTRIYHPNINSNGSICLDILRSQWSPALTISKVLLSICSLLCDPNPDDPLVPEIARIYKTDRERYNQLAREWTQKYAM</sequence>
<evidence type="ECO:0000250" key="1">
    <source>
        <dbReference type="UniProtKB" id="P06104"/>
    </source>
</evidence>
<evidence type="ECO:0000255" key="2">
    <source>
        <dbReference type="PROSITE-ProRule" id="PRU00388"/>
    </source>
</evidence>
<evidence type="ECO:0000255" key="3">
    <source>
        <dbReference type="PROSITE-ProRule" id="PRU10133"/>
    </source>
</evidence>
<evidence type="ECO:0000269" key="4">
    <source>
    </source>
</evidence>
<evidence type="ECO:0000269" key="5">
    <source>
    </source>
</evidence>
<evidence type="ECO:0000269" key="6">
    <source>
    </source>
</evidence>
<evidence type="ECO:0000269" key="7">
    <source>
    </source>
</evidence>
<evidence type="ECO:0000303" key="8">
    <source>
    </source>
</evidence>
<evidence type="ECO:0000303" key="9">
    <source>
    </source>
</evidence>
<evidence type="ECO:0000312" key="10">
    <source>
        <dbReference type="WormBase" id="M7.1"/>
    </source>
</evidence>
<evidence type="ECO:0007829" key="11">
    <source>
        <dbReference type="PDB" id="1Z2U"/>
    </source>
</evidence>
<protein>
    <recommendedName>
        <fullName>Ubiquitin-conjugating enzyme E2 2</fullName>
        <ecNumber>2.3.2.23</ecNumber>
    </recommendedName>
    <alternativeName>
        <fullName>E2 ubiquitin-conjugating enzyme 2</fullName>
    </alternativeName>
    <alternativeName>
        <fullName>Lethal protein 70</fullName>
    </alternativeName>
    <alternativeName>
        <fullName>Ubiquitin carrier protein 2</fullName>
    </alternativeName>
    <alternativeName>
        <fullName>Ubiquitin-protein ligase 2</fullName>
    </alternativeName>
</protein>
<organism>
    <name type="scientific">Caenorhabditis elegans</name>
    <dbReference type="NCBI Taxonomy" id="6239"/>
    <lineage>
        <taxon>Eukaryota</taxon>
        <taxon>Metazoa</taxon>
        <taxon>Ecdysozoa</taxon>
        <taxon>Nematoda</taxon>
        <taxon>Chromadorea</taxon>
        <taxon>Rhabditida</taxon>
        <taxon>Rhabditina</taxon>
        <taxon>Rhabditomorpha</taxon>
        <taxon>Rhabditoidea</taxon>
        <taxon>Rhabditidae</taxon>
        <taxon>Peloderinae</taxon>
        <taxon>Caenorhabditis</taxon>
    </lineage>
</organism>
<feature type="chain" id="PRO_0000082515" description="Ubiquitin-conjugating enzyme E2 2">
    <location>
        <begin position="1"/>
        <end position="147"/>
    </location>
</feature>
<feature type="domain" description="UBC core" evidence="2">
    <location>
        <begin position="1"/>
        <end position="147"/>
    </location>
</feature>
<feature type="active site" description="Glycyl thioester intermediate" evidence="2 3">
    <location>
        <position position="85"/>
    </location>
</feature>
<feature type="mutagenesis site" description="In ns770; Viable. Inappropriate survival of male gonadal linker cell; exacerbated on a heat shock transcription factor hsf-1 mutant background. Simultaneous RNAi-mediated knockdown of cul-3 causes a synergistic increase in linker cell survival." evidence="5">
    <original>P</original>
    <variation>S</variation>
    <location>
        <position position="61"/>
    </location>
</feature>
<feature type="mutagenesis site" description="In s1132; hermaphrodites arrest during the early stages of larval stages." evidence="7">
    <original>H</original>
    <variation>Y</variation>
    <location>
        <position position="75"/>
    </location>
</feature>
<feature type="helix" evidence="11">
    <location>
        <begin position="1"/>
        <end position="15"/>
    </location>
</feature>
<feature type="strand" evidence="11">
    <location>
        <begin position="19"/>
        <end position="26"/>
    </location>
</feature>
<feature type="strand" evidence="11">
    <location>
        <begin position="29"/>
        <end position="38"/>
    </location>
</feature>
<feature type="turn" evidence="11">
    <location>
        <begin position="44"/>
        <end position="47"/>
    </location>
</feature>
<feature type="strand" evidence="11">
    <location>
        <begin position="49"/>
        <end position="55"/>
    </location>
</feature>
<feature type="turn" evidence="11">
    <location>
        <begin position="58"/>
        <end position="61"/>
    </location>
</feature>
<feature type="strand" evidence="11">
    <location>
        <begin position="66"/>
        <end position="71"/>
    </location>
</feature>
<feature type="helix" evidence="11">
    <location>
        <begin position="87"/>
        <end position="89"/>
    </location>
</feature>
<feature type="turn" evidence="11">
    <location>
        <begin position="90"/>
        <end position="92"/>
    </location>
</feature>
<feature type="helix" evidence="11">
    <location>
        <begin position="99"/>
        <end position="111"/>
    </location>
</feature>
<feature type="helix" evidence="11">
    <location>
        <begin position="121"/>
        <end position="129"/>
    </location>
</feature>
<feature type="helix" evidence="11">
    <location>
        <begin position="131"/>
        <end position="145"/>
    </location>
</feature>
<name>UBC2_CAEEL</name>